<protein>
    <recommendedName>
        <fullName evidence="1">Trans-aconitate 2-methyltransferase</fullName>
        <ecNumber evidence="1">2.1.1.144</ecNumber>
    </recommendedName>
</protein>
<keyword id="KW-0963">Cytoplasm</keyword>
<keyword id="KW-0489">Methyltransferase</keyword>
<keyword id="KW-1185">Reference proteome</keyword>
<keyword id="KW-0949">S-adenosyl-L-methionine</keyword>
<keyword id="KW-0808">Transferase</keyword>
<comment type="function">
    <text evidence="1">Catalyzes the S-adenosylmethionine monomethyl esterification of trans-aconitate.</text>
</comment>
<comment type="catalytic activity">
    <reaction evidence="1">
        <text>trans-aconitate + S-adenosyl-L-methionine = (E)-3-(methoxycarbonyl)pent-2-enedioate + S-adenosyl-L-homocysteine</text>
        <dbReference type="Rhea" id="RHEA:14969"/>
        <dbReference type="ChEBI" id="CHEBI:15708"/>
        <dbReference type="ChEBI" id="CHEBI:57470"/>
        <dbReference type="ChEBI" id="CHEBI:57856"/>
        <dbReference type="ChEBI" id="CHEBI:59789"/>
        <dbReference type="EC" id="2.1.1.144"/>
    </reaction>
</comment>
<comment type="subcellular location">
    <subcellularLocation>
        <location evidence="1">Cytoplasm</location>
    </subcellularLocation>
</comment>
<comment type="similarity">
    <text evidence="1">Belongs to the methyltransferase superfamily. Tam family.</text>
</comment>
<evidence type="ECO:0000255" key="1">
    <source>
        <dbReference type="HAMAP-Rule" id="MF_00560"/>
    </source>
</evidence>
<reference key="1">
    <citation type="journal article" date="2006" name="Nat. Biotechnol.">
        <title>Complete genome of the mutualistic, N2-fixing grass endophyte Azoarcus sp. strain BH72.</title>
        <authorList>
            <person name="Krause A."/>
            <person name="Ramakumar A."/>
            <person name="Bartels D."/>
            <person name="Battistoni F."/>
            <person name="Bekel T."/>
            <person name="Boch J."/>
            <person name="Boehm M."/>
            <person name="Friedrich F."/>
            <person name="Hurek T."/>
            <person name="Krause L."/>
            <person name="Linke B."/>
            <person name="McHardy A.C."/>
            <person name="Sarkar A."/>
            <person name="Schneiker S."/>
            <person name="Syed A.A."/>
            <person name="Thauer R."/>
            <person name="Vorhoelter F.-J."/>
            <person name="Weidner S."/>
            <person name="Puehler A."/>
            <person name="Reinhold-Hurek B."/>
            <person name="Kaiser O."/>
            <person name="Goesmann A."/>
        </authorList>
    </citation>
    <scope>NUCLEOTIDE SEQUENCE [LARGE SCALE GENOMIC DNA]</scope>
    <source>
        <strain>BH72</strain>
    </source>
</reference>
<accession>A1K8U5</accession>
<gene>
    <name evidence="1" type="primary">tam</name>
    <name type="ordered locus">azo2633</name>
</gene>
<proteinExistence type="inferred from homology"/>
<name>TAM_AZOSB</name>
<sequence length="253" mass="28297">MPTWDDQQYLKFADERTRAARDLLARVPLDDAATVVDLGCGPGNSTALLVERWPQARVVGVDSSAEMLRSARQALPQVEWMQADLRAWAPAAPVDLIFANAVMQWLPDHATLLPELLRHLRPGGVLAIQMPRNYDEPSHRLMRETPGPWAARLAGARAIAPLPAAAWYYDLLAPHARQLELWQTTYEQVMDDAGAIVEWVRGTGLRPYLEALAEDEHPAYLAAYEAGIDAAYPPRSDGRRLFPFPRLFMVAVR</sequence>
<dbReference type="EC" id="2.1.1.144" evidence="1"/>
<dbReference type="EMBL" id="AM406670">
    <property type="protein sequence ID" value="CAL95250.1"/>
    <property type="molecule type" value="Genomic_DNA"/>
</dbReference>
<dbReference type="RefSeq" id="WP_011766360.1">
    <property type="nucleotide sequence ID" value="NC_008702.1"/>
</dbReference>
<dbReference type="SMR" id="A1K8U5"/>
<dbReference type="STRING" id="62928.azo2633"/>
<dbReference type="KEGG" id="azo:azo2633"/>
<dbReference type="eggNOG" id="COG4106">
    <property type="taxonomic scope" value="Bacteria"/>
</dbReference>
<dbReference type="HOGENOM" id="CLU_037990_5_2_4"/>
<dbReference type="Proteomes" id="UP000002588">
    <property type="component" value="Chromosome"/>
</dbReference>
<dbReference type="GO" id="GO:0005737">
    <property type="term" value="C:cytoplasm"/>
    <property type="evidence" value="ECO:0007669"/>
    <property type="project" value="UniProtKB-SubCell"/>
</dbReference>
<dbReference type="GO" id="GO:0030798">
    <property type="term" value="F:trans-aconitate 2-methyltransferase activity"/>
    <property type="evidence" value="ECO:0007669"/>
    <property type="project" value="UniProtKB-UniRule"/>
</dbReference>
<dbReference type="GO" id="GO:0032259">
    <property type="term" value="P:methylation"/>
    <property type="evidence" value="ECO:0007669"/>
    <property type="project" value="UniProtKB-KW"/>
</dbReference>
<dbReference type="CDD" id="cd02440">
    <property type="entry name" value="AdoMet_MTases"/>
    <property type="match status" value="1"/>
</dbReference>
<dbReference type="Gene3D" id="1.10.150.290">
    <property type="entry name" value="S-adenosyl-L-methionine-dependent methyltransferases"/>
    <property type="match status" value="1"/>
</dbReference>
<dbReference type="Gene3D" id="3.40.50.150">
    <property type="entry name" value="Vaccinia Virus protein VP39"/>
    <property type="match status" value="1"/>
</dbReference>
<dbReference type="HAMAP" id="MF_00560">
    <property type="entry name" value="Tran_acon_Me_trans"/>
    <property type="match status" value="1"/>
</dbReference>
<dbReference type="InterPro" id="IPR041698">
    <property type="entry name" value="Methyltransf_25"/>
</dbReference>
<dbReference type="InterPro" id="IPR029063">
    <property type="entry name" value="SAM-dependent_MTases_sf"/>
</dbReference>
<dbReference type="InterPro" id="IPR023506">
    <property type="entry name" value="Trans-aconitate_MeTrfase"/>
</dbReference>
<dbReference type="InterPro" id="IPR023149">
    <property type="entry name" value="Trans_acon_MeTrfase_C"/>
</dbReference>
<dbReference type="NCBIfam" id="NF002463">
    <property type="entry name" value="PRK01683.1"/>
    <property type="match status" value="1"/>
</dbReference>
<dbReference type="PANTHER" id="PTHR43861:SF1">
    <property type="entry name" value="TRANS-ACONITATE 2-METHYLTRANSFERASE"/>
    <property type="match status" value="1"/>
</dbReference>
<dbReference type="PANTHER" id="PTHR43861">
    <property type="entry name" value="TRANS-ACONITATE 2-METHYLTRANSFERASE-RELATED"/>
    <property type="match status" value="1"/>
</dbReference>
<dbReference type="Pfam" id="PF13649">
    <property type="entry name" value="Methyltransf_25"/>
    <property type="match status" value="1"/>
</dbReference>
<dbReference type="SUPFAM" id="SSF53335">
    <property type="entry name" value="S-adenosyl-L-methionine-dependent methyltransferases"/>
    <property type="match status" value="1"/>
</dbReference>
<organism>
    <name type="scientific">Azoarcus sp. (strain BH72)</name>
    <dbReference type="NCBI Taxonomy" id="418699"/>
    <lineage>
        <taxon>Bacteria</taxon>
        <taxon>Pseudomonadati</taxon>
        <taxon>Pseudomonadota</taxon>
        <taxon>Betaproteobacteria</taxon>
        <taxon>Rhodocyclales</taxon>
        <taxon>Zoogloeaceae</taxon>
        <taxon>Azoarcus</taxon>
    </lineage>
</organism>
<feature type="chain" id="PRO_1000056554" description="Trans-aconitate 2-methyltransferase">
    <location>
        <begin position="1"/>
        <end position="253"/>
    </location>
</feature>